<keyword id="KW-0413">Isomerase</keyword>
<keyword id="KW-0539">Nucleus</keyword>
<keyword id="KW-0597">Phosphoprotein</keyword>
<keyword id="KW-1185">Reference proteome</keyword>
<keyword id="KW-0687">Ribonucleoprotein</keyword>
<keyword id="KW-0690">Ribosome biogenesis</keyword>
<keyword id="KW-0694">RNA-binding</keyword>
<keyword id="KW-0698">rRNA processing</keyword>
<accession>Q9LD90</accession>
<accession>Q42348</accession>
<accession>Q94AA2</accession>
<organism>
    <name type="scientific">Arabidopsis thaliana</name>
    <name type="common">Mouse-ear cress</name>
    <dbReference type="NCBI Taxonomy" id="3702"/>
    <lineage>
        <taxon>Eukaryota</taxon>
        <taxon>Viridiplantae</taxon>
        <taxon>Streptophyta</taxon>
        <taxon>Embryophyta</taxon>
        <taxon>Tracheophyta</taxon>
        <taxon>Spermatophyta</taxon>
        <taxon>Magnoliopsida</taxon>
        <taxon>eudicotyledons</taxon>
        <taxon>Gunneridae</taxon>
        <taxon>Pentapetalae</taxon>
        <taxon>rosids</taxon>
        <taxon>malvids</taxon>
        <taxon>Brassicales</taxon>
        <taxon>Brassicaceae</taxon>
        <taxon>Camelineae</taxon>
        <taxon>Arabidopsis</taxon>
    </lineage>
</organism>
<proteinExistence type="evidence at protein level"/>
<feature type="chain" id="PRO_0000121990" description="H/ACA ribonucleoprotein complex subunit 4">
    <location>
        <begin position="1"/>
        <end position="565"/>
    </location>
</feature>
<feature type="domain" description="PUA" evidence="2">
    <location>
        <begin position="287"/>
        <end position="362"/>
    </location>
</feature>
<feature type="region of interest" description="Disordered" evidence="3">
    <location>
        <begin position="1"/>
        <end position="28"/>
    </location>
</feature>
<feature type="region of interest" description="Disordered" evidence="3">
    <location>
        <begin position="433"/>
        <end position="565"/>
    </location>
</feature>
<feature type="compositionally biased region" description="Basic residues" evidence="3">
    <location>
        <begin position="546"/>
        <end position="557"/>
    </location>
</feature>
<feature type="active site" description="Nucleophile" evidence="1">
    <location>
        <position position="116"/>
    </location>
</feature>
<feature type="modified residue" description="Phosphoserine" evidence="6 8">
    <location>
        <position position="450"/>
    </location>
</feature>
<feature type="modified residue" description="Phosphoserine" evidence="7 8">
    <location>
        <position position="515"/>
    </location>
</feature>
<feature type="modified residue" description="Phosphoserine" evidence="7 8">
    <location>
        <position position="539"/>
    </location>
</feature>
<comment type="function">
    <text evidence="1">Plays a central role in ribosomal RNA processing. Probable catalytic subunit of H/ACA small nucleolar ribonucleoprotein (H/ACA snoRNP) complex, which catalyzes pseudouridylation of rRNA. This involves the isomerization of uridine such that the ribose is subsequently attached to C5, instead of the normal N1. Pseudouridine ('psi') residues may serve to stabilize the conformation of rRNAs (By similarity).</text>
</comment>
<comment type="catalytic activity">
    <reaction>
        <text>a uridine in RNA = a pseudouridine in RNA</text>
        <dbReference type="Rhea" id="RHEA:48348"/>
        <dbReference type="Rhea" id="RHEA-COMP:12068"/>
        <dbReference type="Rhea" id="RHEA-COMP:12069"/>
        <dbReference type="ChEBI" id="CHEBI:65314"/>
        <dbReference type="ChEBI" id="CHEBI:65315"/>
    </reaction>
</comment>
<comment type="subunit">
    <text evidence="1 4">Component of the small nucleolar ribonucleoprotein particle containing H/ACA-type snoRNAs (H/ACA snoRNPs) (By similarity). Component of the telomerase holoenzyme complex at least composed of TERT, CBF5, POT1a and a telomerase RNA template component TER1. Interacts with POT1a.</text>
</comment>
<comment type="subcellular location">
    <subcellularLocation>
        <location evidence="1">Nucleus</location>
        <location evidence="1">Nucleolus</location>
    </subcellularLocation>
</comment>
<comment type="similarity">
    <text evidence="5">Belongs to the pseudouridine synthase TruB family.</text>
</comment>
<comment type="sequence caution" evidence="5">
    <conflict type="frameshift">
        <sequence resource="EMBL-CDS" id="AAK83589"/>
    </conflict>
</comment>
<name>CBF5_ARATH</name>
<gene>
    <name type="primary">CBF5</name>
    <name type="synonym">NAP57</name>
    <name type="ordered locus">At3g57150</name>
    <name type="ORF">F24I3.230</name>
</gene>
<protein>
    <recommendedName>
        <fullName>H/ACA ribonucleoprotein complex subunit 4</fullName>
        <ecNumber>5.4.99.-</ecNumber>
    </recommendedName>
    <alternativeName>
        <fullName>CBF5 homolog</fullName>
    </alternativeName>
    <alternativeName>
        <fullName>Dyskerin</fullName>
    </alternativeName>
    <alternativeName>
        <fullName>Nopp-140-associated protein of 57 kDa homolog</fullName>
        <shortName>AtNAP57</shortName>
    </alternativeName>
    <alternativeName>
        <fullName>Nucleolar protein NAP57 homolog</fullName>
    </alternativeName>
</protein>
<evidence type="ECO:0000250" key="1"/>
<evidence type="ECO:0000255" key="2">
    <source>
        <dbReference type="PROSITE-ProRule" id="PRU00161"/>
    </source>
</evidence>
<evidence type="ECO:0000256" key="3">
    <source>
        <dbReference type="SAM" id="MobiDB-lite"/>
    </source>
</evidence>
<evidence type="ECO:0000269" key="4">
    <source>
    </source>
</evidence>
<evidence type="ECO:0000305" key="5"/>
<evidence type="ECO:0007744" key="6">
    <source>
    </source>
</evidence>
<evidence type="ECO:0007744" key="7">
    <source>
    </source>
</evidence>
<evidence type="ECO:0007744" key="8">
    <source>
    </source>
</evidence>
<reference key="1">
    <citation type="journal article" date="2001" name="Acta Biochim. Pol.">
        <title>Cloning and characterization of Arabidopsis thaliana AtNAP57 -- a homologue of yeast pseudouridine synthase Cbf5p.</title>
        <authorList>
            <person name="Maceluch J."/>
            <person name="Kmieciak M."/>
            <person name="Szweykowska-Kulinska Z."/>
            <person name="Jarmolowski A."/>
        </authorList>
    </citation>
    <scope>NUCLEOTIDE SEQUENCE [MRNA]</scope>
</reference>
<reference key="2">
    <citation type="journal article" date="2000" name="Nature">
        <title>Sequence and analysis of chromosome 3 of the plant Arabidopsis thaliana.</title>
        <authorList>
            <person name="Salanoubat M."/>
            <person name="Lemcke K."/>
            <person name="Rieger M."/>
            <person name="Ansorge W."/>
            <person name="Unseld M."/>
            <person name="Fartmann B."/>
            <person name="Valle G."/>
            <person name="Bloecker H."/>
            <person name="Perez-Alonso M."/>
            <person name="Obermaier B."/>
            <person name="Delseny M."/>
            <person name="Boutry M."/>
            <person name="Grivell L.A."/>
            <person name="Mache R."/>
            <person name="Puigdomenech P."/>
            <person name="De Simone V."/>
            <person name="Choisne N."/>
            <person name="Artiguenave F."/>
            <person name="Robert C."/>
            <person name="Brottier P."/>
            <person name="Wincker P."/>
            <person name="Cattolico L."/>
            <person name="Weissenbach J."/>
            <person name="Saurin W."/>
            <person name="Quetier F."/>
            <person name="Schaefer M."/>
            <person name="Mueller-Auer S."/>
            <person name="Gabel C."/>
            <person name="Fuchs M."/>
            <person name="Benes V."/>
            <person name="Wurmbach E."/>
            <person name="Drzonek H."/>
            <person name="Erfle H."/>
            <person name="Jordan N."/>
            <person name="Bangert S."/>
            <person name="Wiedelmann R."/>
            <person name="Kranz H."/>
            <person name="Voss H."/>
            <person name="Holland R."/>
            <person name="Brandt P."/>
            <person name="Nyakatura G."/>
            <person name="Vezzi A."/>
            <person name="D'Angelo M."/>
            <person name="Pallavicini A."/>
            <person name="Toppo S."/>
            <person name="Simionati B."/>
            <person name="Conrad A."/>
            <person name="Hornischer K."/>
            <person name="Kauer G."/>
            <person name="Loehnert T.-H."/>
            <person name="Nordsiek G."/>
            <person name="Reichelt J."/>
            <person name="Scharfe M."/>
            <person name="Schoen O."/>
            <person name="Bargues M."/>
            <person name="Terol J."/>
            <person name="Climent J."/>
            <person name="Navarro P."/>
            <person name="Collado C."/>
            <person name="Perez-Perez A."/>
            <person name="Ottenwaelder B."/>
            <person name="Duchemin D."/>
            <person name="Cooke R."/>
            <person name="Laudie M."/>
            <person name="Berger-Llauro C."/>
            <person name="Purnelle B."/>
            <person name="Masuy D."/>
            <person name="de Haan M."/>
            <person name="Maarse A.C."/>
            <person name="Alcaraz J.-P."/>
            <person name="Cottet A."/>
            <person name="Casacuberta E."/>
            <person name="Monfort A."/>
            <person name="Argiriou A."/>
            <person name="Flores M."/>
            <person name="Liguori R."/>
            <person name="Vitale D."/>
            <person name="Mannhaupt G."/>
            <person name="Haase D."/>
            <person name="Schoof H."/>
            <person name="Rudd S."/>
            <person name="Zaccaria P."/>
            <person name="Mewes H.-W."/>
            <person name="Mayer K.F.X."/>
            <person name="Kaul S."/>
            <person name="Town C.D."/>
            <person name="Koo H.L."/>
            <person name="Tallon L.J."/>
            <person name="Jenkins J."/>
            <person name="Rooney T."/>
            <person name="Rizzo M."/>
            <person name="Walts A."/>
            <person name="Utterback T."/>
            <person name="Fujii C.Y."/>
            <person name="Shea T.P."/>
            <person name="Creasy T.H."/>
            <person name="Haas B."/>
            <person name="Maiti R."/>
            <person name="Wu D."/>
            <person name="Peterson J."/>
            <person name="Van Aken S."/>
            <person name="Pai G."/>
            <person name="Militscher J."/>
            <person name="Sellers P."/>
            <person name="Gill J.E."/>
            <person name="Feldblyum T.V."/>
            <person name="Preuss D."/>
            <person name="Lin X."/>
            <person name="Nierman W.C."/>
            <person name="Salzberg S.L."/>
            <person name="White O."/>
            <person name="Venter J.C."/>
            <person name="Fraser C.M."/>
            <person name="Kaneko T."/>
            <person name="Nakamura Y."/>
            <person name="Sato S."/>
            <person name="Kato T."/>
            <person name="Asamizu E."/>
            <person name="Sasamoto S."/>
            <person name="Kimura T."/>
            <person name="Idesawa K."/>
            <person name="Kawashima K."/>
            <person name="Kishida Y."/>
            <person name="Kiyokawa C."/>
            <person name="Kohara M."/>
            <person name="Matsumoto M."/>
            <person name="Matsuno A."/>
            <person name="Muraki A."/>
            <person name="Nakayama S."/>
            <person name="Nakazaki N."/>
            <person name="Shinpo S."/>
            <person name="Takeuchi C."/>
            <person name="Wada T."/>
            <person name="Watanabe A."/>
            <person name="Yamada M."/>
            <person name="Yasuda M."/>
            <person name="Tabata S."/>
        </authorList>
    </citation>
    <scope>NUCLEOTIDE SEQUENCE [LARGE SCALE GENOMIC DNA]</scope>
    <source>
        <strain>cv. Columbia</strain>
    </source>
</reference>
<reference key="3">
    <citation type="journal article" date="2017" name="Plant J.">
        <title>Araport11: a complete reannotation of the Arabidopsis thaliana reference genome.</title>
        <authorList>
            <person name="Cheng C.Y."/>
            <person name="Krishnakumar V."/>
            <person name="Chan A.P."/>
            <person name="Thibaud-Nissen F."/>
            <person name="Schobel S."/>
            <person name="Town C.D."/>
        </authorList>
    </citation>
    <scope>GENOME REANNOTATION</scope>
    <source>
        <strain>cv. Columbia</strain>
    </source>
</reference>
<reference key="4">
    <citation type="journal article" date="2003" name="Science">
        <title>Empirical analysis of transcriptional activity in the Arabidopsis genome.</title>
        <authorList>
            <person name="Yamada K."/>
            <person name="Lim J."/>
            <person name="Dale J.M."/>
            <person name="Chen H."/>
            <person name="Shinn P."/>
            <person name="Palm C.J."/>
            <person name="Southwick A.M."/>
            <person name="Wu H.C."/>
            <person name="Kim C.J."/>
            <person name="Nguyen M."/>
            <person name="Pham P.K."/>
            <person name="Cheuk R.F."/>
            <person name="Karlin-Newmann G."/>
            <person name="Liu S.X."/>
            <person name="Lam B."/>
            <person name="Sakano H."/>
            <person name="Wu T."/>
            <person name="Yu G."/>
            <person name="Miranda M."/>
            <person name="Quach H.L."/>
            <person name="Tripp M."/>
            <person name="Chang C.H."/>
            <person name="Lee J.M."/>
            <person name="Toriumi M.J."/>
            <person name="Chan M.M."/>
            <person name="Tang C.C."/>
            <person name="Onodera C.S."/>
            <person name="Deng J.M."/>
            <person name="Akiyama K."/>
            <person name="Ansari Y."/>
            <person name="Arakawa T."/>
            <person name="Banh J."/>
            <person name="Banno F."/>
            <person name="Bowser L."/>
            <person name="Brooks S.Y."/>
            <person name="Carninci P."/>
            <person name="Chao Q."/>
            <person name="Choy N."/>
            <person name="Enju A."/>
            <person name="Goldsmith A.D."/>
            <person name="Gurjal M."/>
            <person name="Hansen N.F."/>
            <person name="Hayashizaki Y."/>
            <person name="Johnson-Hopson C."/>
            <person name="Hsuan V.W."/>
            <person name="Iida K."/>
            <person name="Karnes M."/>
            <person name="Khan S."/>
            <person name="Koesema E."/>
            <person name="Ishida J."/>
            <person name="Jiang P.X."/>
            <person name="Jones T."/>
            <person name="Kawai J."/>
            <person name="Kamiya A."/>
            <person name="Meyers C."/>
            <person name="Nakajima M."/>
            <person name="Narusaka M."/>
            <person name="Seki M."/>
            <person name="Sakurai T."/>
            <person name="Satou M."/>
            <person name="Tamse R."/>
            <person name="Vaysberg M."/>
            <person name="Wallender E.K."/>
            <person name="Wong C."/>
            <person name="Yamamura Y."/>
            <person name="Yuan S."/>
            <person name="Shinozaki K."/>
            <person name="Davis R.W."/>
            <person name="Theologis A."/>
            <person name="Ecker J.R."/>
        </authorList>
    </citation>
    <scope>NUCLEOTIDE SEQUENCE [LARGE SCALE MRNA]</scope>
    <source>
        <strain>cv. Columbia</strain>
    </source>
</reference>
<reference key="5">
    <citation type="journal article" date="1996" name="Plant J.">
        <title>Further progress towards a catalogue of all Arabidopsis genes: analysis of a set of 5000 non-redundant ESTs.</title>
        <authorList>
            <person name="Cooke R."/>
            <person name="Raynal M."/>
            <person name="Laudie M."/>
            <person name="Grellet F."/>
            <person name="Delseny M."/>
            <person name="Morris P.-C."/>
            <person name="Guerrier D."/>
            <person name="Giraudat J."/>
            <person name="Quigley F."/>
            <person name="Clabault G."/>
            <person name="Li Y.-F."/>
            <person name="Mache R."/>
            <person name="Krivitzky M."/>
            <person name="Gy I.J.-J."/>
            <person name="Kreis M."/>
            <person name="Lecharny A."/>
            <person name="Parmentier Y."/>
            <person name="Marbach J."/>
            <person name="Fleck J."/>
            <person name="Clement B."/>
            <person name="Philipps G."/>
            <person name="Herve C."/>
            <person name="Bardet C."/>
            <person name="Tremousaygue D."/>
            <person name="Lescure B."/>
            <person name="Lacomme C."/>
            <person name="Roby D."/>
            <person name="Jourjon M.-F."/>
            <person name="Chabrier P."/>
            <person name="Charpenteau J.-L."/>
            <person name="Desprez T."/>
            <person name="Amselem J."/>
            <person name="Chiapello H."/>
            <person name="Hoefte H."/>
        </authorList>
    </citation>
    <scope>NUCLEOTIDE SEQUENCE [LARGE SCALE MRNA] OF 2-125</scope>
    <source>
        <strain>cv. Columbia</strain>
    </source>
</reference>
<reference key="6">
    <citation type="journal article" date="2007" name="Mol. Cell. Proteomics">
        <title>Multidimensional protein identification technology (MudPIT) analysis of ubiquitinated proteins in plants.</title>
        <authorList>
            <person name="Maor R."/>
            <person name="Jones A."/>
            <person name="Nuehse T.S."/>
            <person name="Studholme D.J."/>
            <person name="Peck S.C."/>
            <person name="Shirasu K."/>
        </authorList>
    </citation>
    <scope>IDENTIFICATION BY MASS SPECTROMETRY [LARGE SCALE ANALYSIS]</scope>
    <source>
        <strain>cv. Landsberg erecta</strain>
    </source>
</reference>
<reference key="7">
    <citation type="journal article" date="2008" name="J. Proteome Res.">
        <title>Site-specific phosphorylation profiling of Arabidopsis proteins by mass spectrometry and peptide chip analysis.</title>
        <authorList>
            <person name="de la Fuente van Bentem S."/>
            <person name="Anrather D."/>
            <person name="Dohnal I."/>
            <person name="Roitinger E."/>
            <person name="Csaszar E."/>
            <person name="Joore J."/>
            <person name="Buijnink J."/>
            <person name="Carreri A."/>
            <person name="Forzani C."/>
            <person name="Lorkovic Z.J."/>
            <person name="Barta A."/>
            <person name="Lecourieux D."/>
            <person name="Verhounig A."/>
            <person name="Jonak C."/>
            <person name="Hirt H."/>
        </authorList>
    </citation>
    <scope>PHOSPHORYLATION [LARGE SCALE ANALYSIS] AT SER-450</scope>
    <scope>IDENTIFICATION BY MASS SPECTROMETRY [LARGE SCALE ANALYSIS]</scope>
    <source>
        <tissue>Root</tissue>
    </source>
</reference>
<reference key="8">
    <citation type="journal article" date="2008" name="Mol. Cell. Biol.">
        <title>Dyskerin is a component of the Arabidopsis telomerase RNP required for telomere maintenance.</title>
        <authorList>
            <person name="Kannan K."/>
            <person name="Nelson A.D."/>
            <person name="Shippen D.E."/>
        </authorList>
    </citation>
    <scope>INTERACTION WITH POT1A</scope>
    <scope>COMPONENT OF THE TELOMERASE COMPLEX</scope>
</reference>
<reference key="9">
    <citation type="journal article" date="2009" name="J. Proteomics">
        <title>Phosphoproteomic analysis of nuclei-enriched fractions from Arabidopsis thaliana.</title>
        <authorList>
            <person name="Jones A.M.E."/>
            <person name="MacLean D."/>
            <person name="Studholme D.J."/>
            <person name="Serna-Sanz A."/>
            <person name="Andreasson E."/>
            <person name="Rathjen J.P."/>
            <person name="Peck S.C."/>
        </authorList>
    </citation>
    <scope>PHOSPHORYLATION [LARGE SCALE ANALYSIS] AT SER-515 AND SER-539</scope>
    <scope>IDENTIFICATION BY MASS SPECTROMETRY [LARGE SCALE ANALYSIS]</scope>
    <source>
        <strain>cv. Columbia</strain>
    </source>
</reference>
<reference key="10">
    <citation type="journal article" date="2009" name="Plant Physiol.">
        <title>Large-scale Arabidopsis phosphoproteome profiling reveals novel chloroplast kinase substrates and phosphorylation networks.</title>
        <authorList>
            <person name="Reiland S."/>
            <person name="Messerli G."/>
            <person name="Baerenfaller K."/>
            <person name="Gerrits B."/>
            <person name="Endler A."/>
            <person name="Grossmann J."/>
            <person name="Gruissem W."/>
            <person name="Baginsky S."/>
        </authorList>
    </citation>
    <scope>PHOSPHORYLATION [LARGE SCALE ANALYSIS] AT SER-450; SER-515 AND SER-539</scope>
    <scope>IDENTIFICATION BY MASS SPECTROMETRY [LARGE SCALE ANALYSIS]</scope>
</reference>
<dbReference type="EC" id="5.4.99.-"/>
<dbReference type="EMBL" id="AF234984">
    <property type="protein sequence ID" value="AAF43210.2"/>
    <property type="molecule type" value="mRNA"/>
</dbReference>
<dbReference type="EMBL" id="AL138655">
    <property type="protein sequence ID" value="CAB72185.1"/>
    <property type="molecule type" value="Genomic_DNA"/>
</dbReference>
<dbReference type="EMBL" id="CP002686">
    <property type="protein sequence ID" value="AEE79621.1"/>
    <property type="molecule type" value="Genomic_DNA"/>
</dbReference>
<dbReference type="EMBL" id="AY049247">
    <property type="protein sequence ID" value="AAK83589.1"/>
    <property type="status" value="ALT_FRAME"/>
    <property type="molecule type" value="mRNA"/>
</dbReference>
<dbReference type="EMBL" id="BT003810">
    <property type="protein sequence ID" value="AAO41863.1"/>
    <property type="molecule type" value="mRNA"/>
</dbReference>
<dbReference type="EMBL" id="F20038">
    <property type="protein sequence ID" value="CAA23387.1"/>
    <property type="molecule type" value="mRNA"/>
</dbReference>
<dbReference type="PIR" id="T47775">
    <property type="entry name" value="T47775"/>
</dbReference>
<dbReference type="RefSeq" id="NP_191274.1">
    <property type="nucleotide sequence ID" value="NM_115574.3"/>
</dbReference>
<dbReference type="SMR" id="Q9LD90"/>
<dbReference type="BioGRID" id="10198">
    <property type="interactions" value="9"/>
</dbReference>
<dbReference type="FunCoup" id="Q9LD90">
    <property type="interactions" value="4111"/>
</dbReference>
<dbReference type="IntAct" id="Q9LD90">
    <property type="interactions" value="1"/>
</dbReference>
<dbReference type="STRING" id="3702.Q9LD90"/>
<dbReference type="iPTMnet" id="Q9LD90"/>
<dbReference type="SwissPalm" id="Q9LD90"/>
<dbReference type="PaxDb" id="3702-AT3G57150.1"/>
<dbReference type="ProteomicsDB" id="223928"/>
<dbReference type="EnsemblPlants" id="AT3G57150.1">
    <property type="protein sequence ID" value="AT3G57150.1"/>
    <property type="gene ID" value="AT3G57150"/>
</dbReference>
<dbReference type="GeneID" id="824882"/>
<dbReference type="Gramene" id="AT3G57150.1">
    <property type="protein sequence ID" value="AT3G57150.1"/>
    <property type="gene ID" value="AT3G57150"/>
</dbReference>
<dbReference type="KEGG" id="ath:AT3G57150"/>
<dbReference type="Araport" id="AT3G57150"/>
<dbReference type="TAIR" id="AT3G57150">
    <property type="gene designation" value="NAP57"/>
</dbReference>
<dbReference type="eggNOG" id="KOG2529">
    <property type="taxonomic scope" value="Eukaryota"/>
</dbReference>
<dbReference type="HOGENOM" id="CLU_032087_3_2_1"/>
<dbReference type="InParanoid" id="Q9LD90"/>
<dbReference type="OMA" id="FWISCEV"/>
<dbReference type="PhylomeDB" id="Q9LD90"/>
<dbReference type="BioCyc" id="ARA:AT3G57150-MONOMER"/>
<dbReference type="CD-CODE" id="4299E36E">
    <property type="entry name" value="Nucleolus"/>
</dbReference>
<dbReference type="PRO" id="PR:Q9LD90"/>
<dbReference type="Proteomes" id="UP000006548">
    <property type="component" value="Chromosome 3"/>
</dbReference>
<dbReference type="ExpressionAtlas" id="Q9LD90">
    <property type="expression patterns" value="baseline and differential"/>
</dbReference>
<dbReference type="GO" id="GO:0005829">
    <property type="term" value="C:cytosol"/>
    <property type="evidence" value="ECO:0007005"/>
    <property type="project" value="TAIR"/>
</dbReference>
<dbReference type="GO" id="GO:0005730">
    <property type="term" value="C:nucleolus"/>
    <property type="evidence" value="ECO:0007005"/>
    <property type="project" value="TAIR"/>
</dbReference>
<dbReference type="GO" id="GO:0009506">
    <property type="term" value="C:plasmodesma"/>
    <property type="evidence" value="ECO:0007005"/>
    <property type="project" value="TAIR"/>
</dbReference>
<dbReference type="GO" id="GO:1990904">
    <property type="term" value="C:ribonucleoprotein complex"/>
    <property type="evidence" value="ECO:0007669"/>
    <property type="project" value="UniProtKB-KW"/>
</dbReference>
<dbReference type="GO" id="GO:0009982">
    <property type="term" value="F:pseudouridine synthase activity"/>
    <property type="evidence" value="ECO:0000250"/>
    <property type="project" value="TAIR"/>
</dbReference>
<dbReference type="GO" id="GO:0003723">
    <property type="term" value="F:RNA binding"/>
    <property type="evidence" value="ECO:0007669"/>
    <property type="project" value="UniProtKB-KW"/>
</dbReference>
<dbReference type="GO" id="GO:0001522">
    <property type="term" value="P:pseudouridine synthesis"/>
    <property type="evidence" value="ECO:0007669"/>
    <property type="project" value="InterPro"/>
</dbReference>
<dbReference type="GO" id="GO:0006364">
    <property type="term" value="P:rRNA processing"/>
    <property type="evidence" value="ECO:0007669"/>
    <property type="project" value="UniProtKB-KW"/>
</dbReference>
<dbReference type="CDD" id="cd02572">
    <property type="entry name" value="PseudoU_synth_hDyskerin"/>
    <property type="match status" value="1"/>
</dbReference>
<dbReference type="CDD" id="cd21148">
    <property type="entry name" value="PUA_Cbf5"/>
    <property type="match status" value="1"/>
</dbReference>
<dbReference type="FunFam" id="3.30.2350.10:FF:000001">
    <property type="entry name" value="H/ACA ribonucleoprotein complex subunit CBF5"/>
    <property type="match status" value="1"/>
</dbReference>
<dbReference type="Gene3D" id="3.30.2350.10">
    <property type="entry name" value="Pseudouridine synthase"/>
    <property type="match status" value="1"/>
</dbReference>
<dbReference type="Gene3D" id="2.30.130.10">
    <property type="entry name" value="PUA domain"/>
    <property type="match status" value="1"/>
</dbReference>
<dbReference type="InterPro" id="IPR012960">
    <property type="entry name" value="Dyskerin-like"/>
</dbReference>
<dbReference type="InterPro" id="IPR020103">
    <property type="entry name" value="PsdUridine_synth_cat_dom_sf"/>
</dbReference>
<dbReference type="InterPro" id="IPR002501">
    <property type="entry name" value="PsdUridine_synth_N"/>
</dbReference>
<dbReference type="InterPro" id="IPR002478">
    <property type="entry name" value="PUA"/>
</dbReference>
<dbReference type="InterPro" id="IPR015947">
    <property type="entry name" value="PUA-like_sf"/>
</dbReference>
<dbReference type="InterPro" id="IPR036974">
    <property type="entry name" value="PUA_sf"/>
</dbReference>
<dbReference type="InterPro" id="IPR004802">
    <property type="entry name" value="tRNA_PsdUridine_synth_B_fam"/>
</dbReference>
<dbReference type="InterPro" id="IPR032819">
    <property type="entry name" value="TruB_C"/>
</dbReference>
<dbReference type="InterPro" id="IPR004521">
    <property type="entry name" value="Uncharacterised_CHP00451"/>
</dbReference>
<dbReference type="NCBIfam" id="TIGR00425">
    <property type="entry name" value="CBF5"/>
    <property type="match status" value="1"/>
</dbReference>
<dbReference type="NCBIfam" id="NF003280">
    <property type="entry name" value="PRK04270.1"/>
    <property type="match status" value="1"/>
</dbReference>
<dbReference type="NCBIfam" id="TIGR00451">
    <property type="entry name" value="unchar_dom_2"/>
    <property type="match status" value="1"/>
</dbReference>
<dbReference type="PANTHER" id="PTHR23127">
    <property type="entry name" value="CENTROMERE/MICROTUBULE BINDING PROTEIN CBF5"/>
    <property type="match status" value="1"/>
</dbReference>
<dbReference type="PANTHER" id="PTHR23127:SF0">
    <property type="entry name" value="H_ACA RIBONUCLEOPROTEIN COMPLEX SUBUNIT DKC1"/>
    <property type="match status" value="1"/>
</dbReference>
<dbReference type="Pfam" id="PF08068">
    <property type="entry name" value="DKCLD"/>
    <property type="match status" value="1"/>
</dbReference>
<dbReference type="Pfam" id="PF01472">
    <property type="entry name" value="PUA"/>
    <property type="match status" value="1"/>
</dbReference>
<dbReference type="Pfam" id="PF16198">
    <property type="entry name" value="TruB_C_2"/>
    <property type="match status" value="1"/>
</dbReference>
<dbReference type="Pfam" id="PF01509">
    <property type="entry name" value="TruB_N"/>
    <property type="match status" value="1"/>
</dbReference>
<dbReference type="SMART" id="SM01136">
    <property type="entry name" value="DKCLD"/>
    <property type="match status" value="1"/>
</dbReference>
<dbReference type="SMART" id="SM00359">
    <property type="entry name" value="PUA"/>
    <property type="match status" value="1"/>
</dbReference>
<dbReference type="SUPFAM" id="SSF55120">
    <property type="entry name" value="Pseudouridine synthase"/>
    <property type="match status" value="1"/>
</dbReference>
<dbReference type="SUPFAM" id="SSF88697">
    <property type="entry name" value="PUA domain-like"/>
    <property type="match status" value="1"/>
</dbReference>
<dbReference type="PROSITE" id="PS50890">
    <property type="entry name" value="PUA"/>
    <property type="match status" value="1"/>
</dbReference>
<sequence>MAEVDISHSKKKKQDKTENDAADTGDYMIKPQSFTPAIDTSQWPILLKNYDRLNVRTGHYTPISAGHSPLKRPLQEYIRYGVINLDKPANPSSHEVVAWIKRILRVEKTGHSGTLDPKVTGNLIVCIDRATRLVKSQQGAGKEYVCVARLHSAVPDVAKVARALESLTGAVFQRPPLISAVKRQLRIRTIYESKLLEYDADRHLVVFWVSCEAGTYIRTMCVHLGLLLGVGGHMQELRRVRSGILGENNNMVTMHDVMDAQFVYDNSRDESYLRRVIMPLEMILTSYKRLVVKDSAVNAICYGAKLMIPGLLRFENDIDVGTEVVLMTTKGEAIAVGIAEMTTSVMATCDHGVVAKIKRVVMDRDTYPRKWGLGPRASMKKKLIADGKLDKHGKPNEKTPVEWSRNVVLPTGGDAIIAGAAAAPEEIKADAENGEAGEARKRKHDDSSDSPAPVTTKKSKTKEVEGEEAEEKVKSSKKKKKKDKEEEKEEEAGSEKKEKKKKKDKKEEVIEEVASPKSEKKKKKKSKDTEAAVDAEDESAAEKSEKKKKKKDKKKKNKDSEDDEE</sequence>